<reference key="1">
    <citation type="journal article" date="2005" name="Genomics">
        <title>Trace amine-associated receptors form structurally and functionally distinct subfamilies of novel G protein-coupled receptors.</title>
        <authorList>
            <person name="Lindemann L."/>
            <person name="Ebeling M."/>
            <person name="Kratochwil N.A."/>
            <person name="Bunzow J.R."/>
            <person name="Grandy D.K."/>
            <person name="Hoener M.C."/>
        </authorList>
    </citation>
    <scope>NUCLEOTIDE SEQUENCE [GENOMIC DNA]</scope>
    <source>
        <strain>C57BL/6J</strain>
    </source>
</reference>
<reference key="2">
    <citation type="journal article" date="2004" name="Genome Res.">
        <title>The status, quality, and expansion of the NIH full-length cDNA project: the Mammalian Gene Collection (MGC).</title>
        <authorList>
            <consortium name="The MGC Project Team"/>
        </authorList>
    </citation>
    <scope>NUCLEOTIDE SEQUENCE [LARGE SCALE MRNA]</scope>
    <source>
        <tissue>Brain</tissue>
    </source>
</reference>
<reference key="3">
    <citation type="journal article" date="2006" name="Nature">
        <title>A second class of chemosensory receptors in the olfactory epithelium.</title>
        <authorList>
            <person name="Liberles S.D."/>
            <person name="Buck L.B."/>
        </authorList>
    </citation>
    <scope>FUNCTION</scope>
    <scope>TISSUE SPECIFICITY</scope>
</reference>
<reference key="4">
    <citation type="journal article" date="2012" name="ACS Chem. Biol.">
        <title>Agonists for 13 trace amine-associated receptors provide insight into the molecular basis of odor selectivity.</title>
        <authorList>
            <person name="Ferrero D.M."/>
            <person name="Wacker D."/>
            <person name="Roque M.A."/>
            <person name="Baldwin M.W."/>
            <person name="Stevens R.C."/>
            <person name="Liberles S.D."/>
        </authorList>
    </citation>
    <scope>FUNCTION</scope>
</reference>
<reference key="5">
    <citation type="journal article" date="2013" name="Nature">
        <title>Non-redundant coding of aversive odours in the main olfactory pathway.</title>
        <authorList>
            <person name="Dewan A."/>
            <person name="Pacifico R."/>
            <person name="Zhan R."/>
            <person name="Rinberg D."/>
            <person name="Bozza T."/>
        </authorList>
    </citation>
    <scope>DISRUPTION PHENOTYPE</scope>
</reference>
<keyword id="KW-0002">3D-structure</keyword>
<keyword id="KW-1003">Cell membrane</keyword>
<keyword id="KW-1015">Disulfide bond</keyword>
<keyword id="KW-0297">G-protein coupled receptor</keyword>
<keyword id="KW-0325">Glycoprotein</keyword>
<keyword id="KW-0472">Membrane</keyword>
<keyword id="KW-0675">Receptor</keyword>
<keyword id="KW-1185">Reference proteome</keyword>
<keyword id="KW-0807">Transducer</keyword>
<keyword id="KW-0812">Transmembrane</keyword>
<keyword id="KW-1133">Transmembrane helix</keyword>
<name>TAA7F_MOUSE</name>
<comment type="function">
    <text evidence="5 6">Olfactory receptor activated by trace amines, such as N-methylpiperidine and N,N-dimethylcyclohexylamine (PubMed:16878137, PubMed:22545963). Trace amine compounds are enriched in animal body fluids and act on trace amine-associated receptors (TAARs) to elicit both intraspecific and interspecific innate behaviors (PubMed:16878137, PubMed:22545963). Ligand-binding causes a conformation change that triggers signaling via G(s)-class of G alpha proteins (GNAL or GNAS) (PubMed:16878137).</text>
</comment>
<comment type="subcellular location">
    <subcellularLocation>
        <location evidence="2">Cell membrane</location>
        <topology evidence="3">Multi-pass membrane protein</topology>
    </subcellularLocation>
</comment>
<comment type="tissue specificity">
    <text evidence="5">Specifically expressed in neurons of the olfactory epithelium.</text>
</comment>
<comment type="domain">
    <text evidence="1">In addition to the well known disulfide bond common to G-protein coupled receptor 1 family, trace amine-associated receptors (TAARs) contain an unique disulfide bond (Cys-37-Cys-201) connecting the N-terminus to the extracellular Loop 2 (ECL2), which is required for agonist-induced receptor activation.</text>
</comment>
<comment type="disruption phenotype">
    <text evidence="7">Mice lacking Taar2, Taar3, Taar4, Taar5, Taar6, Taar7a, Taar7b, Taar7d, Taar7e, Taar7f, Taar8a, Taar8b, Taar8c and Taar9 show no visible phenotype or behavioral deficits. They however show an absence of aversion to low concentrations of amines such as 2-phenylethylamine, isopentylamine, N-methylpiperidine and cadaverine.</text>
</comment>
<comment type="similarity">
    <text evidence="4">Belongs to the G-protein coupled receptor 1 family.</text>
</comment>
<sequence length="358" mass="40165">MSIADETVSWNQDSILSRDLFSATSAELCYENLNRSCVRSPYSPGPRLILYAVFGFGAVLAVCGNLLVMTSILHFRQLHSPANFLVASLACADFLVGVMVMPFSMVRSVEGCWYFGDSYCKLHTCFDVSFCYCSLFHLCFISVDRYIAVSDPLAYPTRFTASVSGKCITFSWLLSISYGFSLIYTGASEAGLEDLVSSLTCVGGCQIAVNQTWVFINFSVFLIPTLVMITVYSKIFLIAKQQAQNIEKMSKQTARASDSYKDRVAKRERKAAKTLGIAVAAFLLSWLPYFIDSFIDAFLGFITPTYVYEILVWIVYYNSAMNPLIYAFFYPWFRKAIKLTVTGKILRENSSTTNLFSE</sequence>
<evidence type="ECO:0000250" key="1">
    <source>
        <dbReference type="UniProtKB" id="Q5QD04"/>
    </source>
</evidence>
<evidence type="ECO:0000250" key="2">
    <source>
        <dbReference type="UniProtKB" id="Q923X5"/>
    </source>
</evidence>
<evidence type="ECO:0000255" key="3"/>
<evidence type="ECO:0000255" key="4">
    <source>
        <dbReference type="PROSITE-ProRule" id="PRU00521"/>
    </source>
</evidence>
<evidence type="ECO:0000269" key="5">
    <source>
    </source>
</evidence>
<evidence type="ECO:0000269" key="6">
    <source>
    </source>
</evidence>
<evidence type="ECO:0000269" key="7">
    <source>
    </source>
</evidence>
<evidence type="ECO:0000303" key="8">
    <source>
    </source>
</evidence>
<evidence type="ECO:0000303" key="9">
    <source>
    </source>
</evidence>
<evidence type="ECO:0000312" key="10">
    <source>
        <dbReference type="MGI" id="MGI:3527447"/>
    </source>
</evidence>
<evidence type="ECO:0007829" key="11">
    <source>
        <dbReference type="PDB" id="8PM2"/>
    </source>
</evidence>
<proteinExistence type="evidence at protein level"/>
<organism>
    <name type="scientific">Mus musculus</name>
    <name type="common">Mouse</name>
    <dbReference type="NCBI Taxonomy" id="10090"/>
    <lineage>
        <taxon>Eukaryota</taxon>
        <taxon>Metazoa</taxon>
        <taxon>Chordata</taxon>
        <taxon>Craniata</taxon>
        <taxon>Vertebrata</taxon>
        <taxon>Euteleostomi</taxon>
        <taxon>Mammalia</taxon>
        <taxon>Eutheria</taxon>
        <taxon>Euarchontoglires</taxon>
        <taxon>Glires</taxon>
        <taxon>Rodentia</taxon>
        <taxon>Myomorpha</taxon>
        <taxon>Muroidea</taxon>
        <taxon>Muridae</taxon>
        <taxon>Murinae</taxon>
        <taxon>Mus</taxon>
        <taxon>Mus</taxon>
    </lineage>
</organism>
<gene>
    <name evidence="9 10" type="primary">Taar7f</name>
</gene>
<feature type="chain" id="PRO_0000070171" description="Trace amine-associated receptor 7f">
    <location>
        <begin position="1"/>
        <end position="358"/>
    </location>
</feature>
<feature type="topological domain" description="Extracellular" evidence="3">
    <location>
        <begin position="1"/>
        <end position="47"/>
    </location>
</feature>
<feature type="transmembrane region" description="Helical; Name=1" evidence="3">
    <location>
        <begin position="48"/>
        <end position="68"/>
    </location>
</feature>
<feature type="topological domain" description="Cytoplasmic" evidence="3">
    <location>
        <begin position="69"/>
        <end position="83"/>
    </location>
</feature>
<feature type="transmembrane region" description="Helical; Name=2" evidence="3">
    <location>
        <begin position="84"/>
        <end position="104"/>
    </location>
</feature>
<feature type="topological domain" description="Extracellular" evidence="3">
    <location>
        <begin position="105"/>
        <end position="121"/>
    </location>
</feature>
<feature type="transmembrane region" description="Helical; Name=3" evidence="3">
    <location>
        <begin position="122"/>
        <end position="143"/>
    </location>
</feature>
<feature type="topological domain" description="Cytoplasmic" evidence="3">
    <location>
        <begin position="144"/>
        <end position="166"/>
    </location>
</feature>
<feature type="transmembrane region" description="Helical; Name=4" evidence="3">
    <location>
        <begin position="167"/>
        <end position="187"/>
    </location>
</feature>
<feature type="topological domain" description="Extracellular" evidence="3">
    <location>
        <begin position="188"/>
        <end position="212"/>
    </location>
</feature>
<feature type="transmembrane region" description="Helical; Name=5" evidence="3">
    <location>
        <begin position="213"/>
        <end position="233"/>
    </location>
</feature>
<feature type="topological domain" description="Cytoplasmic" evidence="3">
    <location>
        <begin position="234"/>
        <end position="274"/>
    </location>
</feature>
<feature type="transmembrane region" description="Helical; Name=6" evidence="3">
    <location>
        <begin position="275"/>
        <end position="295"/>
    </location>
</feature>
<feature type="topological domain" description="Extracellular" evidence="3">
    <location>
        <begin position="296"/>
        <end position="309"/>
    </location>
</feature>
<feature type="transmembrane region" description="Helical; Name=7" evidence="3">
    <location>
        <begin position="310"/>
        <end position="333"/>
    </location>
</feature>
<feature type="topological domain" description="Cytoplasmic" evidence="3">
    <location>
        <begin position="334"/>
        <end position="358"/>
    </location>
</feature>
<feature type="glycosylation site" description="N-linked (GlcNAc...) asparagine" evidence="3">
    <location>
        <position position="34"/>
    </location>
</feature>
<feature type="glycosylation site" description="N-linked (GlcNAc...) asparagine" evidence="3">
    <location>
        <position position="210"/>
    </location>
</feature>
<feature type="disulfide bond" evidence="1">
    <location>
        <begin position="37"/>
        <end position="201"/>
    </location>
</feature>
<feature type="disulfide bond" evidence="4">
    <location>
        <begin position="120"/>
        <end position="205"/>
    </location>
</feature>
<feature type="helix" evidence="11">
    <location>
        <begin position="51"/>
        <end position="62"/>
    </location>
</feature>
<feature type="turn" evidence="11">
    <location>
        <begin position="63"/>
        <end position="65"/>
    </location>
</feature>
<feature type="helix" evidence="11">
    <location>
        <begin position="66"/>
        <end position="74"/>
    </location>
</feature>
<feature type="helix" evidence="11">
    <location>
        <begin position="76"/>
        <end position="78"/>
    </location>
</feature>
<feature type="helix" evidence="11">
    <location>
        <begin position="81"/>
        <end position="103"/>
    </location>
</feature>
<feature type="helix" evidence="11">
    <location>
        <begin position="105"/>
        <end position="110"/>
    </location>
</feature>
<feature type="helix" evidence="11">
    <location>
        <begin position="117"/>
        <end position="149"/>
    </location>
</feature>
<feature type="helix" evidence="11">
    <location>
        <begin position="155"/>
        <end position="158"/>
    </location>
</feature>
<feature type="helix" evidence="11">
    <location>
        <begin position="161"/>
        <end position="183"/>
    </location>
</feature>
<feature type="turn" evidence="11">
    <location>
        <begin position="210"/>
        <end position="212"/>
    </location>
</feature>
<feature type="helix" evidence="11">
    <location>
        <begin position="213"/>
        <end position="249"/>
    </location>
</feature>
<feature type="helix" evidence="11">
    <location>
        <begin position="262"/>
        <end position="283"/>
    </location>
</feature>
<feature type="helix" evidence="11">
    <location>
        <begin position="286"/>
        <end position="297"/>
    </location>
</feature>
<feature type="helix" evidence="11">
    <location>
        <begin position="305"/>
        <end position="316"/>
    </location>
</feature>
<feature type="helix" evidence="11">
    <location>
        <begin position="318"/>
        <end position="326"/>
    </location>
</feature>
<feature type="turn" evidence="11">
    <location>
        <begin position="327"/>
        <end position="329"/>
    </location>
</feature>
<feature type="helix" evidence="11">
    <location>
        <begin position="331"/>
        <end position="336"/>
    </location>
</feature>
<dbReference type="EMBL" id="AY702336">
    <property type="protein sequence ID" value="AAV70145.1"/>
    <property type="molecule type" value="Genomic_DNA"/>
</dbReference>
<dbReference type="EMBL" id="BC139175">
    <property type="protein sequence ID" value="AAI39176.1"/>
    <property type="molecule type" value="mRNA"/>
</dbReference>
<dbReference type="EMBL" id="BC139176">
    <property type="protein sequence ID" value="AAI39177.1"/>
    <property type="molecule type" value="mRNA"/>
</dbReference>
<dbReference type="CCDS" id="CCDS23744.1"/>
<dbReference type="RefSeq" id="NP_001010839.1">
    <property type="nucleotide sequence ID" value="NM_001010839.1"/>
</dbReference>
<dbReference type="PDB" id="8PM2">
    <property type="method" value="EM"/>
    <property type="resolution" value="2.92 A"/>
    <property type="chains" value="R=1-358"/>
</dbReference>
<dbReference type="PDBsum" id="8PM2"/>
<dbReference type="EMDB" id="EMD-17756"/>
<dbReference type="SMR" id="Q5QD08"/>
<dbReference type="FunCoup" id="Q5QD08">
    <property type="interactions" value="568"/>
</dbReference>
<dbReference type="STRING" id="10090.ENSMUSP00000071611"/>
<dbReference type="GlyCosmos" id="Q5QD08">
    <property type="glycosylation" value="2 sites, No reported glycans"/>
</dbReference>
<dbReference type="GlyGen" id="Q5QD08">
    <property type="glycosylation" value="2 sites"/>
</dbReference>
<dbReference type="PaxDb" id="10090-ENSMUSP00000071611"/>
<dbReference type="DNASU" id="435207"/>
<dbReference type="Ensembl" id="ENSMUST00000071691.4">
    <property type="protein sequence ID" value="ENSMUSP00000071611.3"/>
    <property type="gene ID" value="ENSMUSG00000100950.2"/>
</dbReference>
<dbReference type="GeneID" id="435207"/>
<dbReference type="KEGG" id="mmu:435207"/>
<dbReference type="UCSC" id="uc007eqn.1">
    <property type="organism name" value="mouse"/>
</dbReference>
<dbReference type="AGR" id="MGI:3527447"/>
<dbReference type="CTD" id="435207"/>
<dbReference type="MGI" id="MGI:3527447">
    <property type="gene designation" value="Taar7f"/>
</dbReference>
<dbReference type="VEuPathDB" id="HostDB:ENSMUSG00000100950"/>
<dbReference type="eggNOG" id="KOG3656">
    <property type="taxonomic scope" value="Eukaryota"/>
</dbReference>
<dbReference type="GeneTree" id="ENSGT00940000160273"/>
<dbReference type="HOGENOM" id="CLU_009579_11_0_1"/>
<dbReference type="InParanoid" id="Q5QD08"/>
<dbReference type="OMA" id="CYENINE"/>
<dbReference type="OrthoDB" id="5959645at2759"/>
<dbReference type="PhylomeDB" id="Q5QD08"/>
<dbReference type="TreeFam" id="TF343107"/>
<dbReference type="BioGRID-ORCS" id="435207">
    <property type="hits" value="2 hits in 76 CRISPR screens"/>
</dbReference>
<dbReference type="PRO" id="PR:Q5QD08"/>
<dbReference type="Proteomes" id="UP000000589">
    <property type="component" value="Chromosome 10"/>
</dbReference>
<dbReference type="RNAct" id="Q5QD08">
    <property type="molecule type" value="protein"/>
</dbReference>
<dbReference type="GO" id="GO:0005886">
    <property type="term" value="C:plasma membrane"/>
    <property type="evidence" value="ECO:0007669"/>
    <property type="project" value="UniProtKB-SubCell"/>
</dbReference>
<dbReference type="GO" id="GO:0001594">
    <property type="term" value="F:trace-amine receptor activity"/>
    <property type="evidence" value="ECO:0000314"/>
    <property type="project" value="UniProtKB"/>
</dbReference>
<dbReference type="GO" id="GO:0007606">
    <property type="term" value="P:sensory perception of chemical stimulus"/>
    <property type="evidence" value="ECO:0000314"/>
    <property type="project" value="UniProtKB"/>
</dbReference>
<dbReference type="FunFam" id="1.20.1070.10:FF:000030">
    <property type="entry name" value="trace amine-associated receptor 1"/>
    <property type="match status" value="1"/>
</dbReference>
<dbReference type="Gene3D" id="1.20.1070.10">
    <property type="entry name" value="Rhodopsin 7-helix transmembrane proteins"/>
    <property type="match status" value="1"/>
</dbReference>
<dbReference type="InterPro" id="IPR000276">
    <property type="entry name" value="GPCR_Rhodpsn"/>
</dbReference>
<dbReference type="InterPro" id="IPR017452">
    <property type="entry name" value="GPCR_Rhodpsn_7TM"/>
</dbReference>
<dbReference type="InterPro" id="IPR050569">
    <property type="entry name" value="TAAR"/>
</dbReference>
<dbReference type="InterPro" id="IPR009132">
    <property type="entry name" value="TAAR_fam"/>
</dbReference>
<dbReference type="PANTHER" id="PTHR24249">
    <property type="entry name" value="HISTAMINE RECEPTOR-RELATED G-PROTEIN COUPLED RECEPTOR"/>
    <property type="match status" value="1"/>
</dbReference>
<dbReference type="PANTHER" id="PTHR24249:SF78">
    <property type="entry name" value="TRACE AMINE-ASSOCIATED RECEPTOR 7A-RELATED"/>
    <property type="match status" value="1"/>
</dbReference>
<dbReference type="Pfam" id="PF00001">
    <property type="entry name" value="7tm_1"/>
    <property type="match status" value="1"/>
</dbReference>
<dbReference type="PRINTS" id="PR00237">
    <property type="entry name" value="GPCRRHODOPSN"/>
</dbReference>
<dbReference type="PRINTS" id="PR01830">
    <property type="entry name" value="TRACEAMINER"/>
</dbReference>
<dbReference type="SMART" id="SM01381">
    <property type="entry name" value="7TM_GPCR_Srsx"/>
    <property type="match status" value="1"/>
</dbReference>
<dbReference type="SUPFAM" id="SSF81321">
    <property type="entry name" value="Family A G protein-coupled receptor-like"/>
    <property type="match status" value="1"/>
</dbReference>
<dbReference type="PROSITE" id="PS00237">
    <property type="entry name" value="G_PROTEIN_RECEP_F1_1"/>
    <property type="match status" value="1"/>
</dbReference>
<dbReference type="PROSITE" id="PS50262">
    <property type="entry name" value="G_PROTEIN_RECEP_F1_2"/>
    <property type="match status" value="1"/>
</dbReference>
<accession>Q5QD08</accession>
<accession>B2RT90</accession>
<protein>
    <recommendedName>
        <fullName evidence="9">Trace amine-associated receptor 7f</fullName>
        <shortName evidence="8">TaR-7f</shortName>
        <shortName evidence="8">Trace amine receptor 7f</shortName>
        <shortName evidence="9">mTaar7f</shortName>
    </recommendedName>
</protein>